<comment type="function">
    <text evidence="1">Phosphorolytic 3'-5' exoribonuclease that plays an important role in tRNA 3'-end maturation. Removes nucleotide residues following the 3'-CCA terminus of tRNAs; can also add nucleotides to the ends of RNA molecules by using nucleoside diphosphates as substrates, but this may not be physiologically important. Probably plays a role in initiation of 16S rRNA degradation (leading to ribosome degradation) during starvation.</text>
</comment>
<comment type="catalytic activity">
    <reaction evidence="1">
        <text>tRNA(n+1) + phosphate = tRNA(n) + a ribonucleoside 5'-diphosphate</text>
        <dbReference type="Rhea" id="RHEA:10628"/>
        <dbReference type="Rhea" id="RHEA-COMP:17343"/>
        <dbReference type="Rhea" id="RHEA-COMP:17344"/>
        <dbReference type="ChEBI" id="CHEBI:43474"/>
        <dbReference type="ChEBI" id="CHEBI:57930"/>
        <dbReference type="ChEBI" id="CHEBI:173114"/>
        <dbReference type="EC" id="2.7.7.56"/>
    </reaction>
</comment>
<comment type="subunit">
    <text evidence="1">Homohexameric ring arranged as a trimer of dimers.</text>
</comment>
<comment type="similarity">
    <text evidence="1">Belongs to the RNase PH family.</text>
</comment>
<accession>C0RGM7</accession>
<keyword id="KW-0548">Nucleotidyltransferase</keyword>
<keyword id="KW-0694">RNA-binding</keyword>
<keyword id="KW-0698">rRNA processing</keyword>
<keyword id="KW-0808">Transferase</keyword>
<keyword id="KW-0819">tRNA processing</keyword>
<keyword id="KW-0820">tRNA-binding</keyword>
<reference key="1">
    <citation type="submission" date="2009-03" db="EMBL/GenBank/DDBJ databases">
        <title>Brucella melitensis ATCC 23457 whole genome shotgun sequencing project.</title>
        <authorList>
            <person name="Setubal J.C."/>
            <person name="Boyle S."/>
            <person name="Crasta O.R."/>
            <person name="Gillespie J.J."/>
            <person name="Kenyon R.W."/>
            <person name="Lu J."/>
            <person name="Mane S."/>
            <person name="Nagrani S."/>
            <person name="Shallom J.M."/>
            <person name="Shallom S."/>
            <person name="Shukla M."/>
            <person name="Snyder E.E."/>
            <person name="Sobral B.W."/>
            <person name="Wattam A.R."/>
            <person name="Will R."/>
            <person name="Williams K."/>
            <person name="Yoo H."/>
            <person name="Munk C."/>
            <person name="Tapia R."/>
            <person name="Han C."/>
            <person name="Detter J.C."/>
            <person name="Bruce D."/>
            <person name="Brettin T.S."/>
        </authorList>
    </citation>
    <scope>NUCLEOTIDE SEQUENCE [LARGE SCALE GENOMIC DNA]</scope>
    <source>
        <strain>ATCC 23457</strain>
    </source>
</reference>
<gene>
    <name evidence="1" type="primary">rph</name>
    <name type="ordered locus">BMEA_A0179</name>
</gene>
<proteinExistence type="inferred from homology"/>
<feature type="chain" id="PRO_1000194469" description="Ribonuclease PH">
    <location>
        <begin position="1"/>
        <end position="238"/>
    </location>
</feature>
<feature type="binding site" evidence="1">
    <location>
        <position position="86"/>
    </location>
    <ligand>
        <name>phosphate</name>
        <dbReference type="ChEBI" id="CHEBI:43474"/>
        <note>substrate</note>
    </ligand>
</feature>
<feature type="binding site" evidence="1">
    <location>
        <begin position="124"/>
        <end position="126"/>
    </location>
    <ligand>
        <name>phosphate</name>
        <dbReference type="ChEBI" id="CHEBI:43474"/>
        <note>substrate</note>
    </ligand>
</feature>
<organism>
    <name type="scientific">Brucella melitensis biotype 2 (strain ATCC 23457)</name>
    <dbReference type="NCBI Taxonomy" id="546272"/>
    <lineage>
        <taxon>Bacteria</taxon>
        <taxon>Pseudomonadati</taxon>
        <taxon>Pseudomonadota</taxon>
        <taxon>Alphaproteobacteria</taxon>
        <taxon>Hyphomicrobiales</taxon>
        <taxon>Brucellaceae</taxon>
        <taxon>Brucella/Ochrobactrum group</taxon>
        <taxon>Brucella</taxon>
    </lineage>
</organism>
<evidence type="ECO:0000255" key="1">
    <source>
        <dbReference type="HAMAP-Rule" id="MF_00564"/>
    </source>
</evidence>
<sequence>MRPSKRAADEMRTISFERGVSKHAEGSCLVKFGDTHVLCTASLEEKVPGWMRNTGKGWVTAEYGMLPRSTGERMRREAAAGKQGGRTQEIQRLIGRSLRAVVDMQALGEMQITVDCDVIQADGGTRTAAITGGWVALHECLRWMEARQMVRVEKVLKDHVAAISCGIYEGVPVLDLDYAEDSVAETDSNFVMTGKGGIVEIQGTAEGVPFSEEEFGALMKLARSGIDRLVSLQKMAVA</sequence>
<protein>
    <recommendedName>
        <fullName evidence="1">Ribonuclease PH</fullName>
        <shortName evidence="1">RNase PH</shortName>
        <ecNumber evidence="1">2.7.7.56</ecNumber>
    </recommendedName>
    <alternativeName>
        <fullName evidence="1">tRNA nucleotidyltransferase</fullName>
    </alternativeName>
</protein>
<name>RNPH_BRUMB</name>
<dbReference type="EC" id="2.7.7.56" evidence="1"/>
<dbReference type="EMBL" id="CP001488">
    <property type="protein sequence ID" value="ACN99984.1"/>
    <property type="molecule type" value="Genomic_DNA"/>
</dbReference>
<dbReference type="RefSeq" id="WP_004684686.1">
    <property type="nucleotide sequence ID" value="NC_012441.1"/>
</dbReference>
<dbReference type="SMR" id="C0RGM7"/>
<dbReference type="GeneID" id="29594652"/>
<dbReference type="KEGG" id="bmi:BMEA_A0179"/>
<dbReference type="HOGENOM" id="CLU_050858_0_0_5"/>
<dbReference type="Proteomes" id="UP000001748">
    <property type="component" value="Chromosome I"/>
</dbReference>
<dbReference type="GO" id="GO:0000175">
    <property type="term" value="F:3'-5'-RNA exonuclease activity"/>
    <property type="evidence" value="ECO:0007669"/>
    <property type="project" value="UniProtKB-UniRule"/>
</dbReference>
<dbReference type="GO" id="GO:0000049">
    <property type="term" value="F:tRNA binding"/>
    <property type="evidence" value="ECO:0007669"/>
    <property type="project" value="UniProtKB-UniRule"/>
</dbReference>
<dbReference type="GO" id="GO:0009022">
    <property type="term" value="F:tRNA nucleotidyltransferase activity"/>
    <property type="evidence" value="ECO:0007669"/>
    <property type="project" value="UniProtKB-UniRule"/>
</dbReference>
<dbReference type="GO" id="GO:0016075">
    <property type="term" value="P:rRNA catabolic process"/>
    <property type="evidence" value="ECO:0007669"/>
    <property type="project" value="UniProtKB-UniRule"/>
</dbReference>
<dbReference type="GO" id="GO:0006364">
    <property type="term" value="P:rRNA processing"/>
    <property type="evidence" value="ECO:0007669"/>
    <property type="project" value="UniProtKB-KW"/>
</dbReference>
<dbReference type="GO" id="GO:0008033">
    <property type="term" value="P:tRNA processing"/>
    <property type="evidence" value="ECO:0007669"/>
    <property type="project" value="UniProtKB-UniRule"/>
</dbReference>
<dbReference type="CDD" id="cd11362">
    <property type="entry name" value="RNase_PH_bact"/>
    <property type="match status" value="1"/>
</dbReference>
<dbReference type="FunFam" id="3.30.230.70:FF:000003">
    <property type="entry name" value="Ribonuclease PH"/>
    <property type="match status" value="1"/>
</dbReference>
<dbReference type="Gene3D" id="3.30.230.70">
    <property type="entry name" value="GHMP Kinase, N-terminal domain"/>
    <property type="match status" value="1"/>
</dbReference>
<dbReference type="HAMAP" id="MF_00564">
    <property type="entry name" value="RNase_PH"/>
    <property type="match status" value="1"/>
</dbReference>
<dbReference type="InterPro" id="IPR001247">
    <property type="entry name" value="ExoRNase_PH_dom1"/>
</dbReference>
<dbReference type="InterPro" id="IPR015847">
    <property type="entry name" value="ExoRNase_PH_dom2"/>
</dbReference>
<dbReference type="InterPro" id="IPR036345">
    <property type="entry name" value="ExoRNase_PH_dom2_sf"/>
</dbReference>
<dbReference type="InterPro" id="IPR027408">
    <property type="entry name" value="PNPase/RNase_PH_dom_sf"/>
</dbReference>
<dbReference type="InterPro" id="IPR020568">
    <property type="entry name" value="Ribosomal_Su5_D2-typ_SF"/>
</dbReference>
<dbReference type="InterPro" id="IPR050080">
    <property type="entry name" value="RNase_PH"/>
</dbReference>
<dbReference type="InterPro" id="IPR002381">
    <property type="entry name" value="RNase_PH_bac-type"/>
</dbReference>
<dbReference type="InterPro" id="IPR018336">
    <property type="entry name" value="RNase_PH_CS"/>
</dbReference>
<dbReference type="NCBIfam" id="TIGR01966">
    <property type="entry name" value="RNasePH"/>
    <property type="match status" value="1"/>
</dbReference>
<dbReference type="PANTHER" id="PTHR11953">
    <property type="entry name" value="EXOSOME COMPLEX COMPONENT"/>
    <property type="match status" value="1"/>
</dbReference>
<dbReference type="PANTHER" id="PTHR11953:SF0">
    <property type="entry name" value="EXOSOME COMPLEX COMPONENT RRP41"/>
    <property type="match status" value="1"/>
</dbReference>
<dbReference type="Pfam" id="PF01138">
    <property type="entry name" value="RNase_PH"/>
    <property type="match status" value="1"/>
</dbReference>
<dbReference type="Pfam" id="PF03725">
    <property type="entry name" value="RNase_PH_C"/>
    <property type="match status" value="1"/>
</dbReference>
<dbReference type="SUPFAM" id="SSF55666">
    <property type="entry name" value="Ribonuclease PH domain 2-like"/>
    <property type="match status" value="1"/>
</dbReference>
<dbReference type="SUPFAM" id="SSF54211">
    <property type="entry name" value="Ribosomal protein S5 domain 2-like"/>
    <property type="match status" value="1"/>
</dbReference>
<dbReference type="PROSITE" id="PS01277">
    <property type="entry name" value="RIBONUCLEASE_PH"/>
    <property type="match status" value="1"/>
</dbReference>